<dbReference type="EMBL" id="CP000563">
    <property type="protein sequence ID" value="ABN63614.1"/>
    <property type="molecule type" value="Genomic_DNA"/>
</dbReference>
<dbReference type="RefSeq" id="WP_006083579.1">
    <property type="nucleotide sequence ID" value="NC_009052.1"/>
</dbReference>
<dbReference type="SMR" id="A3DA51"/>
<dbReference type="STRING" id="325240.Sbal_4149"/>
<dbReference type="GeneID" id="94726207"/>
<dbReference type="KEGG" id="sbl:Sbal_4149"/>
<dbReference type="HOGENOM" id="CLU_135723_6_2_6"/>
<dbReference type="OrthoDB" id="9802520at2"/>
<dbReference type="Proteomes" id="UP000001557">
    <property type="component" value="Chromosome"/>
</dbReference>
<dbReference type="GO" id="GO:0005737">
    <property type="term" value="C:cytoplasm"/>
    <property type="evidence" value="ECO:0007669"/>
    <property type="project" value="UniProtKB-ARBA"/>
</dbReference>
<dbReference type="GO" id="GO:1990904">
    <property type="term" value="C:ribonucleoprotein complex"/>
    <property type="evidence" value="ECO:0007669"/>
    <property type="project" value="UniProtKB-KW"/>
</dbReference>
<dbReference type="GO" id="GO:0005840">
    <property type="term" value="C:ribosome"/>
    <property type="evidence" value="ECO:0007669"/>
    <property type="project" value="UniProtKB-KW"/>
</dbReference>
<dbReference type="GO" id="GO:0003735">
    <property type="term" value="F:structural constituent of ribosome"/>
    <property type="evidence" value="ECO:0007669"/>
    <property type="project" value="InterPro"/>
</dbReference>
<dbReference type="GO" id="GO:0006412">
    <property type="term" value="P:translation"/>
    <property type="evidence" value="ECO:0007669"/>
    <property type="project" value="UniProtKB-UniRule"/>
</dbReference>
<dbReference type="HAMAP" id="MF_00251">
    <property type="entry name" value="Ribosomal_bL36"/>
    <property type="match status" value="1"/>
</dbReference>
<dbReference type="InterPro" id="IPR000473">
    <property type="entry name" value="Ribosomal_bL36"/>
</dbReference>
<dbReference type="InterPro" id="IPR035977">
    <property type="entry name" value="Ribosomal_bL36_sp"/>
</dbReference>
<dbReference type="NCBIfam" id="TIGR01022">
    <property type="entry name" value="rpmJ_bact"/>
    <property type="match status" value="1"/>
</dbReference>
<dbReference type="PANTHER" id="PTHR42888">
    <property type="entry name" value="50S RIBOSOMAL PROTEIN L36, CHLOROPLASTIC"/>
    <property type="match status" value="1"/>
</dbReference>
<dbReference type="PANTHER" id="PTHR42888:SF1">
    <property type="entry name" value="LARGE RIBOSOMAL SUBUNIT PROTEIN BL36C"/>
    <property type="match status" value="1"/>
</dbReference>
<dbReference type="Pfam" id="PF00444">
    <property type="entry name" value="Ribosomal_L36"/>
    <property type="match status" value="1"/>
</dbReference>
<dbReference type="SUPFAM" id="SSF57840">
    <property type="entry name" value="Ribosomal protein L36"/>
    <property type="match status" value="1"/>
</dbReference>
<dbReference type="PROSITE" id="PS00828">
    <property type="entry name" value="RIBOSOMAL_L36"/>
    <property type="match status" value="1"/>
</dbReference>
<protein>
    <recommendedName>
        <fullName evidence="1">Large ribosomal subunit protein bL36</fullName>
    </recommendedName>
    <alternativeName>
        <fullName evidence="2">50S ribosomal protein L36</fullName>
    </alternativeName>
</protein>
<gene>
    <name evidence="1" type="primary">rpmJ</name>
    <name type="ordered locus">Sbal_4149</name>
</gene>
<proteinExistence type="inferred from homology"/>
<name>RL36_SHEB5</name>
<sequence length="37" mass="4263">MKVRASVKKICRNCKIVKRSGVVRVICVEPKHKQRQG</sequence>
<comment type="similarity">
    <text evidence="1">Belongs to the bacterial ribosomal protein bL36 family.</text>
</comment>
<organism>
    <name type="scientific">Shewanella baltica (strain OS155 / ATCC BAA-1091)</name>
    <dbReference type="NCBI Taxonomy" id="325240"/>
    <lineage>
        <taxon>Bacteria</taxon>
        <taxon>Pseudomonadati</taxon>
        <taxon>Pseudomonadota</taxon>
        <taxon>Gammaproteobacteria</taxon>
        <taxon>Alteromonadales</taxon>
        <taxon>Shewanellaceae</taxon>
        <taxon>Shewanella</taxon>
    </lineage>
</organism>
<evidence type="ECO:0000255" key="1">
    <source>
        <dbReference type="HAMAP-Rule" id="MF_00251"/>
    </source>
</evidence>
<evidence type="ECO:0000305" key="2"/>
<feature type="chain" id="PRO_1000003414" description="Large ribosomal subunit protein bL36">
    <location>
        <begin position="1"/>
        <end position="37"/>
    </location>
</feature>
<keyword id="KW-1185">Reference proteome</keyword>
<keyword id="KW-0687">Ribonucleoprotein</keyword>
<keyword id="KW-0689">Ribosomal protein</keyword>
<reference key="1">
    <citation type="submission" date="2007-02" db="EMBL/GenBank/DDBJ databases">
        <title>Complete sequence of chromosome of Shewanella baltica OS155.</title>
        <authorList>
            <consortium name="US DOE Joint Genome Institute"/>
            <person name="Copeland A."/>
            <person name="Lucas S."/>
            <person name="Lapidus A."/>
            <person name="Barry K."/>
            <person name="Detter J.C."/>
            <person name="Glavina del Rio T."/>
            <person name="Hammon N."/>
            <person name="Israni S."/>
            <person name="Dalin E."/>
            <person name="Tice H."/>
            <person name="Pitluck S."/>
            <person name="Sims D.R."/>
            <person name="Brettin T."/>
            <person name="Bruce D."/>
            <person name="Han C."/>
            <person name="Tapia R."/>
            <person name="Brainard J."/>
            <person name="Schmutz J."/>
            <person name="Larimer F."/>
            <person name="Land M."/>
            <person name="Hauser L."/>
            <person name="Kyrpides N."/>
            <person name="Mikhailova N."/>
            <person name="Brettar I."/>
            <person name="Klappenbach J."/>
            <person name="Konstantinidis K."/>
            <person name="Rodrigues J."/>
            <person name="Tiedje J."/>
            <person name="Richardson P."/>
        </authorList>
    </citation>
    <scope>NUCLEOTIDE SEQUENCE [LARGE SCALE GENOMIC DNA]</scope>
    <source>
        <strain>OS155 / ATCC BAA-1091</strain>
    </source>
</reference>
<accession>A3DA51</accession>